<evidence type="ECO:0000250" key="1"/>
<accession>Q8P120</accession>
<reference key="1">
    <citation type="journal article" date="2002" name="Proc. Natl. Acad. Sci. U.S.A.">
        <title>Genome sequence and comparative microarray analysis of serotype M18 group A Streptococcus strains associated with acute rheumatic fever outbreaks.</title>
        <authorList>
            <person name="Smoot J.C."/>
            <person name="Barbian K.D."/>
            <person name="Van Gompel J.J."/>
            <person name="Smoot L.M."/>
            <person name="Chaussee M.S."/>
            <person name="Sylva G.L."/>
            <person name="Sturdevant D.E."/>
            <person name="Ricklefs S.M."/>
            <person name="Porcella S.F."/>
            <person name="Parkins L.D."/>
            <person name="Beres S.B."/>
            <person name="Campbell D.S."/>
            <person name="Smith T.M."/>
            <person name="Zhang Q."/>
            <person name="Kapur V."/>
            <person name="Daly J.A."/>
            <person name="Veasy L.G."/>
            <person name="Musser J.M."/>
        </authorList>
    </citation>
    <scope>NUCLEOTIDE SEQUENCE [LARGE SCALE GENOMIC DNA]</scope>
    <source>
        <strain>MGAS8232</strain>
    </source>
</reference>
<comment type="subcellular location">
    <subcellularLocation>
        <location evidence="1">Cell surface</location>
    </subcellularLocation>
</comment>
<name>PVAA_STRP8</name>
<proteinExistence type="inferred from homology"/>
<protein>
    <recommendedName>
        <fullName>Pneumococcal vaccine antigen A homolog</fullName>
    </recommendedName>
</protein>
<gene>
    <name type="primary">pvaA</name>
    <name type="ordered locus">spyM18_1107</name>
</gene>
<organism>
    <name type="scientific">Streptococcus pyogenes serotype M18 (strain MGAS8232)</name>
    <dbReference type="NCBI Taxonomy" id="186103"/>
    <lineage>
        <taxon>Bacteria</taxon>
        <taxon>Bacillati</taxon>
        <taxon>Bacillota</taxon>
        <taxon>Bacilli</taxon>
        <taxon>Lactobacillales</taxon>
        <taxon>Streptococcaceae</taxon>
        <taxon>Streptococcus</taxon>
    </lineage>
</organism>
<sequence>MFRLLKRACSFLLLFVIYQSFVIHHNVQRVLAYKPMVEKTLAENDTKANVDLVLAMIYTETKGGEADVMQSSESSSGQKNSITDSQASIEHGVNLLSHNLALAEEAGVDSWTAVQAYNFGTAYIDYIAKHGGQNTVDLATTYSKTVVAPSLGNTSGQTYFYYHPLALISGGKLYKNGGNIYYSREVHFNLYLIELMSLF</sequence>
<feature type="chain" id="PRO_0000097114" description="Pneumococcal vaccine antigen A homolog">
    <location>
        <begin position="1"/>
        <end position="199"/>
    </location>
</feature>
<dbReference type="EMBL" id="AE009949">
    <property type="protein sequence ID" value="AAL97729.1"/>
    <property type="molecule type" value="Genomic_DNA"/>
</dbReference>
<dbReference type="RefSeq" id="WP_002984653.1">
    <property type="nucleotide sequence ID" value="NC_003485.1"/>
</dbReference>
<dbReference type="SMR" id="Q8P120"/>
<dbReference type="CAZy" id="GH23">
    <property type="family name" value="Glycoside Hydrolase Family 23"/>
</dbReference>
<dbReference type="KEGG" id="spm:spyM18_1107"/>
<dbReference type="HOGENOM" id="CLU_101375_3_0_9"/>
<dbReference type="GO" id="GO:0009986">
    <property type="term" value="C:cell surface"/>
    <property type="evidence" value="ECO:0007669"/>
    <property type="project" value="UniProtKB-SubCell"/>
</dbReference>
<dbReference type="CDD" id="cd16891">
    <property type="entry name" value="CwlT-like"/>
    <property type="match status" value="1"/>
</dbReference>
<dbReference type="Gene3D" id="1.10.530.10">
    <property type="match status" value="1"/>
</dbReference>
<dbReference type="InterPro" id="IPR047194">
    <property type="entry name" value="CwlT-like_lysozyme"/>
</dbReference>
<dbReference type="InterPro" id="IPR023346">
    <property type="entry name" value="Lysozyme-like_dom_sf"/>
</dbReference>
<dbReference type="Pfam" id="PF13702">
    <property type="entry name" value="Lysozyme_like"/>
    <property type="match status" value="1"/>
</dbReference>
<dbReference type="SUPFAM" id="SSF53955">
    <property type="entry name" value="Lysozyme-like"/>
    <property type="match status" value="1"/>
</dbReference>